<accession>A4TCS5</accession>
<gene>
    <name evidence="1" type="primary">dxs</name>
    <name type="ordered locus">Mflv_3923</name>
</gene>
<protein>
    <recommendedName>
        <fullName evidence="1">1-deoxy-D-xylulose-5-phosphate synthase</fullName>
        <ecNumber evidence="1">2.2.1.7</ecNumber>
    </recommendedName>
    <alternativeName>
        <fullName evidence="1">1-deoxyxylulose-5-phosphate synthase</fullName>
        <shortName evidence="1">DXP synthase</shortName>
        <shortName evidence="1">DXPS</shortName>
    </alternativeName>
</protein>
<organism>
    <name type="scientific">Mycolicibacterium gilvum (strain PYR-GCK)</name>
    <name type="common">Mycobacterium gilvum (strain PYR-GCK)</name>
    <dbReference type="NCBI Taxonomy" id="350054"/>
    <lineage>
        <taxon>Bacteria</taxon>
        <taxon>Bacillati</taxon>
        <taxon>Actinomycetota</taxon>
        <taxon>Actinomycetes</taxon>
        <taxon>Mycobacteriales</taxon>
        <taxon>Mycobacteriaceae</taxon>
        <taxon>Mycolicibacterium</taxon>
    </lineage>
</organism>
<feature type="chain" id="PRO_1000079094" description="1-deoxy-D-xylulose-5-phosphate synthase">
    <location>
        <begin position="1"/>
        <end position="637"/>
    </location>
</feature>
<feature type="binding site" evidence="1">
    <location>
        <position position="71"/>
    </location>
    <ligand>
        <name>thiamine diphosphate</name>
        <dbReference type="ChEBI" id="CHEBI:58937"/>
    </ligand>
</feature>
<feature type="binding site" evidence="1">
    <location>
        <begin position="112"/>
        <end position="114"/>
    </location>
    <ligand>
        <name>thiamine diphosphate</name>
        <dbReference type="ChEBI" id="CHEBI:58937"/>
    </ligand>
</feature>
<feature type="binding site" evidence="1">
    <location>
        <position position="144"/>
    </location>
    <ligand>
        <name>Mg(2+)</name>
        <dbReference type="ChEBI" id="CHEBI:18420"/>
    </ligand>
</feature>
<feature type="binding site" evidence="1">
    <location>
        <begin position="145"/>
        <end position="146"/>
    </location>
    <ligand>
        <name>thiamine diphosphate</name>
        <dbReference type="ChEBI" id="CHEBI:58937"/>
    </ligand>
</feature>
<feature type="binding site" evidence="1">
    <location>
        <position position="173"/>
    </location>
    <ligand>
        <name>Mg(2+)</name>
        <dbReference type="ChEBI" id="CHEBI:18420"/>
    </ligand>
</feature>
<feature type="binding site" evidence="1">
    <location>
        <position position="173"/>
    </location>
    <ligand>
        <name>thiamine diphosphate</name>
        <dbReference type="ChEBI" id="CHEBI:58937"/>
    </ligand>
</feature>
<feature type="binding site" evidence="1">
    <location>
        <position position="284"/>
    </location>
    <ligand>
        <name>thiamine diphosphate</name>
        <dbReference type="ChEBI" id="CHEBI:58937"/>
    </ligand>
</feature>
<feature type="binding site" evidence="1">
    <location>
        <position position="365"/>
    </location>
    <ligand>
        <name>thiamine diphosphate</name>
        <dbReference type="ChEBI" id="CHEBI:58937"/>
    </ligand>
</feature>
<dbReference type="EC" id="2.2.1.7" evidence="1"/>
<dbReference type="EMBL" id="CP000656">
    <property type="protein sequence ID" value="ABP46394.1"/>
    <property type="molecule type" value="Genomic_DNA"/>
</dbReference>
<dbReference type="SMR" id="A4TCS5"/>
<dbReference type="STRING" id="350054.Mflv_3923"/>
<dbReference type="KEGG" id="mgi:Mflv_3923"/>
<dbReference type="eggNOG" id="COG1154">
    <property type="taxonomic scope" value="Bacteria"/>
</dbReference>
<dbReference type="HOGENOM" id="CLU_009227_1_4_11"/>
<dbReference type="OrthoDB" id="9803371at2"/>
<dbReference type="UniPathway" id="UPA00064">
    <property type="reaction ID" value="UER00091"/>
</dbReference>
<dbReference type="GO" id="GO:0005829">
    <property type="term" value="C:cytosol"/>
    <property type="evidence" value="ECO:0007669"/>
    <property type="project" value="TreeGrafter"/>
</dbReference>
<dbReference type="GO" id="GO:0008661">
    <property type="term" value="F:1-deoxy-D-xylulose-5-phosphate synthase activity"/>
    <property type="evidence" value="ECO:0007669"/>
    <property type="project" value="UniProtKB-UniRule"/>
</dbReference>
<dbReference type="GO" id="GO:0000287">
    <property type="term" value="F:magnesium ion binding"/>
    <property type="evidence" value="ECO:0007669"/>
    <property type="project" value="UniProtKB-UniRule"/>
</dbReference>
<dbReference type="GO" id="GO:0030976">
    <property type="term" value="F:thiamine pyrophosphate binding"/>
    <property type="evidence" value="ECO:0007669"/>
    <property type="project" value="UniProtKB-UniRule"/>
</dbReference>
<dbReference type="GO" id="GO:0052865">
    <property type="term" value="P:1-deoxy-D-xylulose 5-phosphate biosynthetic process"/>
    <property type="evidence" value="ECO:0007669"/>
    <property type="project" value="UniProtKB-UniPathway"/>
</dbReference>
<dbReference type="GO" id="GO:0019288">
    <property type="term" value="P:isopentenyl diphosphate biosynthetic process, methylerythritol 4-phosphate pathway"/>
    <property type="evidence" value="ECO:0007669"/>
    <property type="project" value="TreeGrafter"/>
</dbReference>
<dbReference type="GO" id="GO:0016114">
    <property type="term" value="P:terpenoid biosynthetic process"/>
    <property type="evidence" value="ECO:0007669"/>
    <property type="project" value="UniProtKB-UniRule"/>
</dbReference>
<dbReference type="GO" id="GO:0009228">
    <property type="term" value="P:thiamine biosynthetic process"/>
    <property type="evidence" value="ECO:0007669"/>
    <property type="project" value="UniProtKB-UniRule"/>
</dbReference>
<dbReference type="CDD" id="cd02007">
    <property type="entry name" value="TPP_DXS"/>
    <property type="match status" value="1"/>
</dbReference>
<dbReference type="CDD" id="cd07033">
    <property type="entry name" value="TPP_PYR_DXS_TK_like"/>
    <property type="match status" value="1"/>
</dbReference>
<dbReference type="FunFam" id="3.40.50.920:FF:000002">
    <property type="entry name" value="1-deoxy-D-xylulose-5-phosphate synthase"/>
    <property type="match status" value="1"/>
</dbReference>
<dbReference type="FunFam" id="3.40.50.970:FF:000005">
    <property type="entry name" value="1-deoxy-D-xylulose-5-phosphate synthase"/>
    <property type="match status" value="1"/>
</dbReference>
<dbReference type="Gene3D" id="3.40.50.920">
    <property type="match status" value="1"/>
</dbReference>
<dbReference type="Gene3D" id="3.40.50.970">
    <property type="match status" value="2"/>
</dbReference>
<dbReference type="HAMAP" id="MF_00315">
    <property type="entry name" value="DXP_synth"/>
    <property type="match status" value="1"/>
</dbReference>
<dbReference type="InterPro" id="IPR005477">
    <property type="entry name" value="Dxylulose-5-P_synthase"/>
</dbReference>
<dbReference type="InterPro" id="IPR029061">
    <property type="entry name" value="THDP-binding"/>
</dbReference>
<dbReference type="InterPro" id="IPR009014">
    <property type="entry name" value="Transketo_C/PFOR_II"/>
</dbReference>
<dbReference type="InterPro" id="IPR005475">
    <property type="entry name" value="Transketolase-like_Pyr-bd"/>
</dbReference>
<dbReference type="InterPro" id="IPR020826">
    <property type="entry name" value="Transketolase_BS"/>
</dbReference>
<dbReference type="InterPro" id="IPR033248">
    <property type="entry name" value="Transketolase_C"/>
</dbReference>
<dbReference type="InterPro" id="IPR049557">
    <property type="entry name" value="Transketolase_CS"/>
</dbReference>
<dbReference type="NCBIfam" id="TIGR00204">
    <property type="entry name" value="dxs"/>
    <property type="match status" value="1"/>
</dbReference>
<dbReference type="NCBIfam" id="NF003933">
    <property type="entry name" value="PRK05444.2-2"/>
    <property type="match status" value="1"/>
</dbReference>
<dbReference type="PANTHER" id="PTHR43322">
    <property type="entry name" value="1-D-DEOXYXYLULOSE 5-PHOSPHATE SYNTHASE-RELATED"/>
    <property type="match status" value="1"/>
</dbReference>
<dbReference type="PANTHER" id="PTHR43322:SF5">
    <property type="entry name" value="1-DEOXY-D-XYLULOSE-5-PHOSPHATE SYNTHASE, CHLOROPLASTIC"/>
    <property type="match status" value="1"/>
</dbReference>
<dbReference type="Pfam" id="PF13292">
    <property type="entry name" value="DXP_synthase_N"/>
    <property type="match status" value="1"/>
</dbReference>
<dbReference type="Pfam" id="PF02779">
    <property type="entry name" value="Transket_pyr"/>
    <property type="match status" value="1"/>
</dbReference>
<dbReference type="Pfam" id="PF02780">
    <property type="entry name" value="Transketolase_C"/>
    <property type="match status" value="1"/>
</dbReference>
<dbReference type="SMART" id="SM00861">
    <property type="entry name" value="Transket_pyr"/>
    <property type="match status" value="1"/>
</dbReference>
<dbReference type="SUPFAM" id="SSF52518">
    <property type="entry name" value="Thiamin diphosphate-binding fold (THDP-binding)"/>
    <property type="match status" value="1"/>
</dbReference>
<dbReference type="SUPFAM" id="SSF52922">
    <property type="entry name" value="TK C-terminal domain-like"/>
    <property type="match status" value="1"/>
</dbReference>
<dbReference type="PROSITE" id="PS00801">
    <property type="entry name" value="TRANSKETOLASE_1"/>
    <property type="match status" value="1"/>
</dbReference>
<dbReference type="PROSITE" id="PS00802">
    <property type="entry name" value="TRANSKETOLASE_2"/>
    <property type="match status" value="1"/>
</dbReference>
<proteinExistence type="inferred from homology"/>
<evidence type="ECO:0000255" key="1">
    <source>
        <dbReference type="HAMAP-Rule" id="MF_00315"/>
    </source>
</evidence>
<name>DXS_MYCGI</name>
<sequence length="637" mass="67854">MLEQIRGPADLQHLSRAQMEDLAREIRDFLIHKVAATGGHLGPNLGVVELTLALHRVFDSPHDPILFDTGHQAYVHKMLTGRSRDFDTLRKKDGLSGYPSRSESEHDWVESSHASSALSYADGLAKAFELNGHRNRHVVAVVGDGALTGGMCWEALNNIAASRRPVVIVVNDNGRSYAPTIGGFAEHLAGLRLQPGYERVLEEGRKAVRGVPMIGEFCYQCMHSIKAGIKDALSPQVMFTDLGLKYVGPIDGHDESAVEGALRHARAFNAPVVVHVVTRKGMGYAPAENDVDEQMHACGVIDPETGLATSVPGPGWTAAFSETLIELAAKRRDIVAITAAMPGPTGLSAFRKRFPDRFFDVGIAEQHAMTSAAGLAMGGMHPVVALYSTFLNRAFDQMLMDVALHKLPVTMVLDRSGITGPDGASHNGMWDLSILGIVPGMRVAAPRDGARLREELAEAVEVKDGPTAVRFPKGDVGEDIPAIERRDGVDVLAVPADGLSDDVLIIAVGAFAAMSVAVAERLRDQGIGVTVVDPRWVLPVPAAINTLAAAHKLVVTVEDNGGHGGVGSAVSAALRRAEIDVPCRDAALPQAFFDHASRGEVLAEVGLTERTIARQITGWVAALGATAGDRQVSESVD</sequence>
<keyword id="KW-0414">Isoprene biosynthesis</keyword>
<keyword id="KW-0460">Magnesium</keyword>
<keyword id="KW-0479">Metal-binding</keyword>
<keyword id="KW-0784">Thiamine biosynthesis</keyword>
<keyword id="KW-0786">Thiamine pyrophosphate</keyword>
<keyword id="KW-0808">Transferase</keyword>
<comment type="function">
    <text evidence="1">Catalyzes the acyloin condensation reaction between C atoms 2 and 3 of pyruvate and glyceraldehyde 3-phosphate to yield 1-deoxy-D-xylulose-5-phosphate (DXP).</text>
</comment>
<comment type="catalytic activity">
    <reaction evidence="1">
        <text>D-glyceraldehyde 3-phosphate + pyruvate + H(+) = 1-deoxy-D-xylulose 5-phosphate + CO2</text>
        <dbReference type="Rhea" id="RHEA:12605"/>
        <dbReference type="ChEBI" id="CHEBI:15361"/>
        <dbReference type="ChEBI" id="CHEBI:15378"/>
        <dbReference type="ChEBI" id="CHEBI:16526"/>
        <dbReference type="ChEBI" id="CHEBI:57792"/>
        <dbReference type="ChEBI" id="CHEBI:59776"/>
        <dbReference type="EC" id="2.2.1.7"/>
    </reaction>
</comment>
<comment type="cofactor">
    <cofactor evidence="1">
        <name>Mg(2+)</name>
        <dbReference type="ChEBI" id="CHEBI:18420"/>
    </cofactor>
    <text evidence="1">Binds 1 Mg(2+) ion per subunit.</text>
</comment>
<comment type="cofactor">
    <cofactor evidence="1">
        <name>thiamine diphosphate</name>
        <dbReference type="ChEBI" id="CHEBI:58937"/>
    </cofactor>
    <text evidence="1">Binds 1 thiamine pyrophosphate per subunit.</text>
</comment>
<comment type="pathway">
    <text evidence="1">Metabolic intermediate biosynthesis; 1-deoxy-D-xylulose 5-phosphate biosynthesis; 1-deoxy-D-xylulose 5-phosphate from D-glyceraldehyde 3-phosphate and pyruvate: step 1/1.</text>
</comment>
<comment type="subunit">
    <text evidence="1">Homodimer.</text>
</comment>
<comment type="similarity">
    <text evidence="1">Belongs to the transketolase family. DXPS subfamily.</text>
</comment>
<reference key="1">
    <citation type="submission" date="2007-04" db="EMBL/GenBank/DDBJ databases">
        <title>Complete sequence of chromosome of Mycobacterium gilvum PYR-GCK.</title>
        <authorList>
            <consortium name="US DOE Joint Genome Institute"/>
            <person name="Copeland A."/>
            <person name="Lucas S."/>
            <person name="Lapidus A."/>
            <person name="Barry K."/>
            <person name="Detter J.C."/>
            <person name="Glavina del Rio T."/>
            <person name="Hammon N."/>
            <person name="Israni S."/>
            <person name="Dalin E."/>
            <person name="Tice H."/>
            <person name="Pitluck S."/>
            <person name="Chain P."/>
            <person name="Malfatti S."/>
            <person name="Shin M."/>
            <person name="Vergez L."/>
            <person name="Schmutz J."/>
            <person name="Larimer F."/>
            <person name="Land M."/>
            <person name="Hauser L."/>
            <person name="Kyrpides N."/>
            <person name="Mikhailova N."/>
            <person name="Miller C."/>
            <person name="Richardson P."/>
        </authorList>
    </citation>
    <scope>NUCLEOTIDE SEQUENCE [LARGE SCALE GENOMIC DNA]</scope>
    <source>
        <strain>PYR-GCK</strain>
    </source>
</reference>